<keyword id="KW-0028">Amino-acid biosynthesis</keyword>
<keyword id="KW-0963">Cytoplasm</keyword>
<keyword id="KW-0378">Hydrolase</keyword>
<keyword id="KW-0460">Magnesium</keyword>
<keyword id="KW-0479">Metal-binding</keyword>
<keyword id="KW-0486">Methionine biosynthesis</keyword>
<keyword id="KW-0539">Nucleus</keyword>
<keyword id="KW-1185">Reference proteome</keyword>
<sequence length="234" mass="26122">MAPIRVVLLDIEGTVCPISFVKDVLFPYALEALPGTLKAKWDSPEFAPYRAAFPAEHAGSQESLAAHVRDLMSKDLKISYLKSLQGYLWETGYRNGELKAPLFLDVAPQLARWREHGGVKVMIYSSGSVPAQKLLFGHTNGEPSDILPWLSDFFDTVNAGPKQEKASYEKIAAKHQEYPIGEWLFLSDNVKEVEAAKQAGMQSYIVDRPGNAELSEEARKEHRVIKSFEEIGDL</sequence>
<name>ENOPH_NEUCR</name>
<protein>
    <recommendedName>
        <fullName evidence="1">Enolase-phosphatase E1</fullName>
        <ecNumber evidence="1">3.1.3.77</ecNumber>
    </recommendedName>
    <alternativeName>
        <fullName evidence="1">2,3-diketo-5-methylthio-1-phosphopentane phosphatase</fullName>
    </alternativeName>
</protein>
<feature type="chain" id="PRO_0000394005" description="Enolase-phosphatase E1">
    <location>
        <begin position="1"/>
        <end position="234"/>
    </location>
</feature>
<feature type="binding site" evidence="1">
    <location>
        <position position="10"/>
    </location>
    <ligand>
        <name>Mg(2+)</name>
        <dbReference type="ChEBI" id="CHEBI:18420"/>
    </ligand>
</feature>
<feature type="binding site" evidence="1">
    <location>
        <position position="12"/>
    </location>
    <ligand>
        <name>Mg(2+)</name>
        <dbReference type="ChEBI" id="CHEBI:18420"/>
    </ligand>
</feature>
<feature type="binding site" evidence="1">
    <location>
        <begin position="125"/>
        <end position="126"/>
    </location>
    <ligand>
        <name>substrate</name>
    </ligand>
</feature>
<feature type="binding site" evidence="1">
    <location>
        <position position="162"/>
    </location>
    <ligand>
        <name>substrate</name>
    </ligand>
</feature>
<feature type="binding site" evidence="1">
    <location>
        <position position="188"/>
    </location>
    <ligand>
        <name>Mg(2+)</name>
        <dbReference type="ChEBI" id="CHEBI:18420"/>
    </ligand>
</feature>
<proteinExistence type="inferred from homology"/>
<evidence type="ECO:0000255" key="1">
    <source>
        <dbReference type="HAMAP-Rule" id="MF_03117"/>
    </source>
</evidence>
<dbReference type="EC" id="3.1.3.77" evidence="1"/>
<dbReference type="EMBL" id="CM002238">
    <property type="protein sequence ID" value="EAA33843.2"/>
    <property type="molecule type" value="Genomic_DNA"/>
</dbReference>
<dbReference type="RefSeq" id="XP_963079.2">
    <property type="nucleotide sequence ID" value="XM_957986.2"/>
</dbReference>
<dbReference type="SMR" id="Q7SBS7"/>
<dbReference type="FunCoup" id="Q7SBS7">
    <property type="interactions" value="619"/>
</dbReference>
<dbReference type="STRING" id="367110.Q7SBS7"/>
<dbReference type="PaxDb" id="5141-EFNCRP00000006004"/>
<dbReference type="EnsemblFungi" id="EAA33843">
    <property type="protein sequence ID" value="EAA33843"/>
    <property type="gene ID" value="NCU06228"/>
</dbReference>
<dbReference type="GeneID" id="3879234"/>
<dbReference type="KEGG" id="ncr:NCU06228"/>
<dbReference type="VEuPathDB" id="FungiDB:NCU06228"/>
<dbReference type="HOGENOM" id="CLU_023273_1_1_1"/>
<dbReference type="InParanoid" id="Q7SBS7"/>
<dbReference type="OrthoDB" id="272500at2759"/>
<dbReference type="UniPathway" id="UPA00904">
    <property type="reaction ID" value="UER00876"/>
</dbReference>
<dbReference type="UniPathway" id="UPA00904">
    <property type="reaction ID" value="UER00877"/>
</dbReference>
<dbReference type="Proteomes" id="UP000001805">
    <property type="component" value="Chromosome 3, Linkage Group III"/>
</dbReference>
<dbReference type="GO" id="GO:0005737">
    <property type="term" value="C:cytoplasm"/>
    <property type="evidence" value="ECO:0007669"/>
    <property type="project" value="UniProtKB-SubCell"/>
</dbReference>
<dbReference type="GO" id="GO:0005634">
    <property type="term" value="C:nucleus"/>
    <property type="evidence" value="ECO:0007669"/>
    <property type="project" value="UniProtKB-SubCell"/>
</dbReference>
<dbReference type="GO" id="GO:0043874">
    <property type="term" value="F:acireductone synthase activity"/>
    <property type="evidence" value="ECO:0000318"/>
    <property type="project" value="GO_Central"/>
</dbReference>
<dbReference type="GO" id="GO:0000287">
    <property type="term" value="F:magnesium ion binding"/>
    <property type="evidence" value="ECO:0007669"/>
    <property type="project" value="UniProtKB-UniRule"/>
</dbReference>
<dbReference type="GO" id="GO:0019509">
    <property type="term" value="P:L-methionine salvage from methylthioadenosine"/>
    <property type="evidence" value="ECO:0000318"/>
    <property type="project" value="GO_Central"/>
</dbReference>
<dbReference type="CDD" id="cd01629">
    <property type="entry name" value="HAD_EP"/>
    <property type="match status" value="1"/>
</dbReference>
<dbReference type="FunFam" id="1.10.720.60:FF:000007">
    <property type="entry name" value="Enolase-phosphatase E1"/>
    <property type="match status" value="1"/>
</dbReference>
<dbReference type="Gene3D" id="1.10.720.60">
    <property type="match status" value="1"/>
</dbReference>
<dbReference type="Gene3D" id="3.40.50.1000">
    <property type="entry name" value="HAD superfamily/HAD-like"/>
    <property type="match status" value="1"/>
</dbReference>
<dbReference type="HAMAP" id="MF_03117">
    <property type="entry name" value="Salvage_MtnC_euk"/>
    <property type="match status" value="1"/>
</dbReference>
<dbReference type="InterPro" id="IPR023943">
    <property type="entry name" value="Enolase-ppase_E1"/>
</dbReference>
<dbReference type="InterPro" id="IPR027511">
    <property type="entry name" value="ENOPH1_eukaryotes"/>
</dbReference>
<dbReference type="InterPro" id="IPR036412">
    <property type="entry name" value="HAD-like_sf"/>
</dbReference>
<dbReference type="InterPro" id="IPR006439">
    <property type="entry name" value="HAD-SF_hydro_IA"/>
</dbReference>
<dbReference type="InterPro" id="IPR023214">
    <property type="entry name" value="HAD_sf"/>
</dbReference>
<dbReference type="NCBIfam" id="TIGR01691">
    <property type="entry name" value="enolase-ppase"/>
    <property type="match status" value="1"/>
</dbReference>
<dbReference type="NCBIfam" id="TIGR01549">
    <property type="entry name" value="HAD-SF-IA-v1"/>
    <property type="match status" value="1"/>
</dbReference>
<dbReference type="PANTHER" id="PTHR20371">
    <property type="entry name" value="ENOLASE-PHOSPHATASE E1"/>
    <property type="match status" value="1"/>
</dbReference>
<dbReference type="PANTHER" id="PTHR20371:SF1">
    <property type="entry name" value="ENOLASE-PHOSPHATASE E1"/>
    <property type="match status" value="1"/>
</dbReference>
<dbReference type="Pfam" id="PF00702">
    <property type="entry name" value="Hydrolase"/>
    <property type="match status" value="1"/>
</dbReference>
<dbReference type="SFLD" id="SFLDG01133">
    <property type="entry name" value="C1.5.4:_Enolase-phosphatase_Li"/>
    <property type="match status" value="1"/>
</dbReference>
<dbReference type="SFLD" id="SFLDG01129">
    <property type="entry name" value="C1.5:_HAD__Beta-PGM__Phosphata"/>
    <property type="match status" value="1"/>
</dbReference>
<dbReference type="SUPFAM" id="SSF56784">
    <property type="entry name" value="HAD-like"/>
    <property type="match status" value="1"/>
</dbReference>
<reference key="1">
    <citation type="journal article" date="2003" name="Nature">
        <title>The genome sequence of the filamentous fungus Neurospora crassa.</title>
        <authorList>
            <person name="Galagan J.E."/>
            <person name="Calvo S.E."/>
            <person name="Borkovich K.A."/>
            <person name="Selker E.U."/>
            <person name="Read N.D."/>
            <person name="Jaffe D.B."/>
            <person name="FitzHugh W."/>
            <person name="Ma L.-J."/>
            <person name="Smirnov S."/>
            <person name="Purcell S."/>
            <person name="Rehman B."/>
            <person name="Elkins T."/>
            <person name="Engels R."/>
            <person name="Wang S."/>
            <person name="Nielsen C.B."/>
            <person name="Butler J."/>
            <person name="Endrizzi M."/>
            <person name="Qui D."/>
            <person name="Ianakiev P."/>
            <person name="Bell-Pedersen D."/>
            <person name="Nelson M.A."/>
            <person name="Werner-Washburne M."/>
            <person name="Selitrennikoff C.P."/>
            <person name="Kinsey J.A."/>
            <person name="Braun E.L."/>
            <person name="Zelter A."/>
            <person name="Schulte U."/>
            <person name="Kothe G.O."/>
            <person name="Jedd G."/>
            <person name="Mewes H.-W."/>
            <person name="Staben C."/>
            <person name="Marcotte E."/>
            <person name="Greenberg D."/>
            <person name="Roy A."/>
            <person name="Foley K."/>
            <person name="Naylor J."/>
            <person name="Stange-Thomann N."/>
            <person name="Barrett R."/>
            <person name="Gnerre S."/>
            <person name="Kamal M."/>
            <person name="Kamvysselis M."/>
            <person name="Mauceli E.W."/>
            <person name="Bielke C."/>
            <person name="Rudd S."/>
            <person name="Frishman D."/>
            <person name="Krystofova S."/>
            <person name="Rasmussen C."/>
            <person name="Metzenberg R.L."/>
            <person name="Perkins D.D."/>
            <person name="Kroken S."/>
            <person name="Cogoni C."/>
            <person name="Macino G."/>
            <person name="Catcheside D.E.A."/>
            <person name="Li W."/>
            <person name="Pratt R.J."/>
            <person name="Osmani S.A."/>
            <person name="DeSouza C.P.C."/>
            <person name="Glass N.L."/>
            <person name="Orbach M.J."/>
            <person name="Berglund J.A."/>
            <person name="Voelker R."/>
            <person name="Yarden O."/>
            <person name="Plamann M."/>
            <person name="Seiler S."/>
            <person name="Dunlap J.C."/>
            <person name="Radford A."/>
            <person name="Aramayo R."/>
            <person name="Natvig D.O."/>
            <person name="Alex L.A."/>
            <person name="Mannhaupt G."/>
            <person name="Ebbole D.J."/>
            <person name="Freitag M."/>
            <person name="Paulsen I."/>
            <person name="Sachs M.S."/>
            <person name="Lander E.S."/>
            <person name="Nusbaum C."/>
            <person name="Birren B.W."/>
        </authorList>
    </citation>
    <scope>NUCLEOTIDE SEQUENCE [LARGE SCALE GENOMIC DNA]</scope>
    <source>
        <strain>ATCC 24698 / 74-OR23-1A / CBS 708.71 / DSM 1257 / FGSC 987</strain>
    </source>
</reference>
<organism>
    <name type="scientific">Neurospora crassa (strain ATCC 24698 / 74-OR23-1A / CBS 708.71 / DSM 1257 / FGSC 987)</name>
    <dbReference type="NCBI Taxonomy" id="367110"/>
    <lineage>
        <taxon>Eukaryota</taxon>
        <taxon>Fungi</taxon>
        <taxon>Dikarya</taxon>
        <taxon>Ascomycota</taxon>
        <taxon>Pezizomycotina</taxon>
        <taxon>Sordariomycetes</taxon>
        <taxon>Sordariomycetidae</taxon>
        <taxon>Sordariales</taxon>
        <taxon>Sordariaceae</taxon>
        <taxon>Neurospora</taxon>
    </lineage>
</organism>
<accession>Q7SBS7</accession>
<gene>
    <name type="primary">utr4</name>
    <name type="ORF">NCU06228</name>
</gene>
<comment type="function">
    <text evidence="1">Bifunctional enzyme that catalyzes the enolization of 2,3-diketo-5-methylthiopentyl-1-phosphate (DK-MTP-1-P) into the intermediate 2-hydroxy-3-keto-5-methylthiopentenyl-1-phosphate (HK-MTPenyl-1-P), which is then dephosphorylated to form the acireductone 1,2-dihydroxy-3-keto-5-methylthiopentene (DHK-MTPene).</text>
</comment>
<comment type="catalytic activity">
    <reaction evidence="1">
        <text>5-methylsulfanyl-2,3-dioxopentyl phosphate + H2O = 1,2-dihydroxy-5-(methylsulfanyl)pent-1-en-3-one + phosphate</text>
        <dbReference type="Rhea" id="RHEA:21700"/>
        <dbReference type="ChEBI" id="CHEBI:15377"/>
        <dbReference type="ChEBI" id="CHEBI:43474"/>
        <dbReference type="ChEBI" id="CHEBI:49252"/>
        <dbReference type="ChEBI" id="CHEBI:58828"/>
        <dbReference type="EC" id="3.1.3.77"/>
    </reaction>
</comment>
<comment type="cofactor">
    <cofactor evidence="1">
        <name>Mg(2+)</name>
        <dbReference type="ChEBI" id="CHEBI:18420"/>
    </cofactor>
    <text evidence="1">Binds 1 Mg(2+) ion per subunit.</text>
</comment>
<comment type="pathway">
    <text evidence="1">Amino-acid biosynthesis; L-methionine biosynthesis via salvage pathway; L-methionine from S-methyl-5-thio-alpha-D-ribose 1-phosphate: step 3/6.</text>
</comment>
<comment type="pathway">
    <text evidence="1">Amino-acid biosynthesis; L-methionine biosynthesis via salvage pathway; L-methionine from S-methyl-5-thio-alpha-D-ribose 1-phosphate: step 4/6.</text>
</comment>
<comment type="subunit">
    <text evidence="1">Monomer.</text>
</comment>
<comment type="subcellular location">
    <subcellularLocation>
        <location evidence="1">Cytoplasm</location>
    </subcellularLocation>
    <subcellularLocation>
        <location evidence="1">Nucleus</location>
    </subcellularLocation>
</comment>
<comment type="similarity">
    <text evidence="1">Belongs to the HAD-like hydrolase superfamily. MasA/MtnC family.</text>
</comment>